<organism>
    <name type="scientific">Rattus norvegicus</name>
    <name type="common">Rat</name>
    <dbReference type="NCBI Taxonomy" id="10116"/>
    <lineage>
        <taxon>Eukaryota</taxon>
        <taxon>Metazoa</taxon>
        <taxon>Chordata</taxon>
        <taxon>Craniata</taxon>
        <taxon>Vertebrata</taxon>
        <taxon>Euteleostomi</taxon>
        <taxon>Mammalia</taxon>
        <taxon>Eutheria</taxon>
        <taxon>Euarchontoglires</taxon>
        <taxon>Glires</taxon>
        <taxon>Rodentia</taxon>
        <taxon>Myomorpha</taxon>
        <taxon>Muroidea</taxon>
        <taxon>Muridae</taxon>
        <taxon>Murinae</taxon>
        <taxon>Rattus</taxon>
    </lineage>
</organism>
<proteinExistence type="evidence at protein level"/>
<name>RASM_RAT</name>
<accession>P97538</accession>
<accession>O09021</accession>
<dbReference type="EC" id="3.6.5.2" evidence="4"/>
<dbReference type="EMBL" id="D89863">
    <property type="protein sequence ID" value="BAA20531.1"/>
    <property type="molecule type" value="mRNA"/>
</dbReference>
<dbReference type="PIR" id="T10774">
    <property type="entry name" value="T10774"/>
</dbReference>
<dbReference type="SMR" id="P97538"/>
<dbReference type="FunCoup" id="P97538">
    <property type="interactions" value="1834"/>
</dbReference>
<dbReference type="IntAct" id="P97538">
    <property type="interactions" value="2"/>
</dbReference>
<dbReference type="MINT" id="P97538"/>
<dbReference type="STRING" id="10116.ENSRNOP00000045851"/>
<dbReference type="PhosphoSitePlus" id="P97538"/>
<dbReference type="PaxDb" id="10116-ENSRNOP00000045851"/>
<dbReference type="UCSC" id="RGD:3111">
    <property type="organism name" value="rat"/>
</dbReference>
<dbReference type="AGR" id="RGD:3111"/>
<dbReference type="RGD" id="3111">
    <property type="gene designation" value="Mras"/>
</dbReference>
<dbReference type="eggNOG" id="KOG0395">
    <property type="taxonomic scope" value="Eukaryota"/>
</dbReference>
<dbReference type="InParanoid" id="P97538"/>
<dbReference type="PhylomeDB" id="P97538"/>
<dbReference type="Reactome" id="R-RNO-5673000">
    <property type="pathway name" value="RAF activation"/>
</dbReference>
<dbReference type="PRO" id="PR:P97538"/>
<dbReference type="Proteomes" id="UP000002494">
    <property type="component" value="Unplaced"/>
</dbReference>
<dbReference type="GO" id="GO:0005886">
    <property type="term" value="C:plasma membrane"/>
    <property type="evidence" value="ECO:0000318"/>
    <property type="project" value="GO_Central"/>
</dbReference>
<dbReference type="GO" id="GO:0000164">
    <property type="term" value="C:protein phosphatase type 1 complex"/>
    <property type="evidence" value="ECO:0000266"/>
    <property type="project" value="RGD"/>
</dbReference>
<dbReference type="GO" id="GO:0003925">
    <property type="term" value="F:G protein activity"/>
    <property type="evidence" value="ECO:0007669"/>
    <property type="project" value="UniProtKB-EC"/>
</dbReference>
<dbReference type="GO" id="GO:0019003">
    <property type="term" value="F:GDP binding"/>
    <property type="evidence" value="ECO:0000318"/>
    <property type="project" value="GO_Central"/>
</dbReference>
<dbReference type="GO" id="GO:0005525">
    <property type="term" value="F:GTP binding"/>
    <property type="evidence" value="ECO:0000318"/>
    <property type="project" value="GO_Central"/>
</dbReference>
<dbReference type="GO" id="GO:0030742">
    <property type="term" value="F:GTP-dependent protein binding"/>
    <property type="evidence" value="ECO:0000266"/>
    <property type="project" value="RGD"/>
</dbReference>
<dbReference type="GO" id="GO:0003924">
    <property type="term" value="F:GTPase activity"/>
    <property type="evidence" value="ECO:0000266"/>
    <property type="project" value="RGD"/>
</dbReference>
<dbReference type="GO" id="GO:1990830">
    <property type="term" value="P:cellular response to leukemia inhibitory factor"/>
    <property type="evidence" value="ECO:0000266"/>
    <property type="project" value="RGD"/>
</dbReference>
<dbReference type="GO" id="GO:0007265">
    <property type="term" value="P:Ras protein signal transduction"/>
    <property type="evidence" value="ECO:0000266"/>
    <property type="project" value="RGD"/>
</dbReference>
<dbReference type="CDD" id="cd04145">
    <property type="entry name" value="M_R_Ras_like"/>
    <property type="match status" value="1"/>
</dbReference>
<dbReference type="FunFam" id="3.40.50.300:FF:000080">
    <property type="entry name" value="Ras-like GTPase Ras1"/>
    <property type="match status" value="1"/>
</dbReference>
<dbReference type="Gene3D" id="3.40.50.300">
    <property type="entry name" value="P-loop containing nucleotide triphosphate hydrolases"/>
    <property type="match status" value="1"/>
</dbReference>
<dbReference type="InterPro" id="IPR027417">
    <property type="entry name" value="P-loop_NTPase"/>
</dbReference>
<dbReference type="InterPro" id="IPR005225">
    <property type="entry name" value="Small_GTP-bd"/>
</dbReference>
<dbReference type="InterPro" id="IPR001806">
    <property type="entry name" value="Small_GTPase"/>
</dbReference>
<dbReference type="InterPro" id="IPR020849">
    <property type="entry name" value="Small_GTPase_Ras-type"/>
</dbReference>
<dbReference type="NCBIfam" id="TIGR00231">
    <property type="entry name" value="small_GTP"/>
    <property type="match status" value="1"/>
</dbReference>
<dbReference type="PANTHER" id="PTHR24070">
    <property type="entry name" value="RAS, DI-RAS, AND RHEB FAMILY MEMBERS OF SMALL GTPASE SUPERFAMILY"/>
    <property type="match status" value="1"/>
</dbReference>
<dbReference type="Pfam" id="PF00071">
    <property type="entry name" value="Ras"/>
    <property type="match status" value="1"/>
</dbReference>
<dbReference type="PRINTS" id="PR00449">
    <property type="entry name" value="RASTRNSFRMNG"/>
</dbReference>
<dbReference type="SMART" id="SM00175">
    <property type="entry name" value="RAB"/>
    <property type="match status" value="1"/>
</dbReference>
<dbReference type="SMART" id="SM00176">
    <property type="entry name" value="RAN"/>
    <property type="match status" value="1"/>
</dbReference>
<dbReference type="SMART" id="SM00173">
    <property type="entry name" value="RAS"/>
    <property type="match status" value="1"/>
</dbReference>
<dbReference type="SMART" id="SM00174">
    <property type="entry name" value="RHO"/>
    <property type="match status" value="1"/>
</dbReference>
<dbReference type="SUPFAM" id="SSF52540">
    <property type="entry name" value="P-loop containing nucleoside triphosphate hydrolases"/>
    <property type="match status" value="1"/>
</dbReference>
<dbReference type="PROSITE" id="PS51421">
    <property type="entry name" value="RAS"/>
    <property type="match status" value="1"/>
</dbReference>
<keyword id="KW-1003">Cell membrane</keyword>
<keyword id="KW-0342">GTP-binding</keyword>
<keyword id="KW-0378">Hydrolase</keyword>
<keyword id="KW-0449">Lipoprotein</keyword>
<keyword id="KW-0472">Membrane</keyword>
<keyword id="KW-0488">Methylation</keyword>
<keyword id="KW-0547">Nucleotide-binding</keyword>
<keyword id="KW-0636">Prenylation</keyword>
<keyword id="KW-1185">Reference proteome</keyword>
<comment type="function">
    <text evidence="3">Signal transducer in the Ras-MAPK signaling pathway that regulates cell proliferation and survival (By similarity). Core component of the SHOC2-MRAS-PP1c (SMP) holophosphatase complex that regulates the MAPK pathway activation (By similarity). The formation of the SMP complex only occurs when MRAS is GTP-bound (By similarity). MRAS has low intrinsic GTPase activity and may require additional factors for activation (By similarity). The SMP complex specifically dephosphorylates the inhibitory phosphorylation at 'Ser-259' of RAF1 kinase, 'Ser-365' of BRAF kinase and 'Ser-214' of ARAF kinase, stimulating their kinase activities (By similarity).</text>
</comment>
<comment type="catalytic activity">
    <reaction>
        <text>GTP + H2O = GDP + phosphate + H(+)</text>
        <dbReference type="Rhea" id="RHEA:19669"/>
        <dbReference type="ChEBI" id="CHEBI:15377"/>
        <dbReference type="ChEBI" id="CHEBI:15378"/>
        <dbReference type="ChEBI" id="CHEBI:37565"/>
        <dbReference type="ChEBI" id="CHEBI:43474"/>
        <dbReference type="ChEBI" id="CHEBI:58189"/>
        <dbReference type="EC" id="3.6.5.2"/>
    </reaction>
</comment>
<comment type="cofactor">
    <cofactor evidence="3">
        <name>Mg(2+)</name>
        <dbReference type="ChEBI" id="CHEBI:18420"/>
    </cofactor>
    <text evidence="3">Binds 1 magnesium ion per subunit.</text>
</comment>
<comment type="subunit">
    <text evidence="2 3 5">Component of the SHOC2-MRAS-PP1c (SMP) holophosphatase complex consisting of SHOC2, GTP-bound M-Ras/MRAS and the catalytic subunit of protein phosphatase 1 (either PPP1CA, PPP1CB or PPP1CC) (By similarity). Interacts (active GTP-bound form) with both SHOC2 and PP1c (all isoforms) to form a tertiary complex; SHOC2 and PP1c preferably bind M-Ras/MRAS, but they also bind K-Ras/KRAS, N-Ras/NRAS and H-Ras/HRAS (By similarity). Interacts with RGL3 (By similarity). Interacts (active GTP-bound form preferentially) with RGS14 (PubMed:19319189).</text>
</comment>
<comment type="subcellular location">
    <subcellularLocation>
        <location evidence="6">Cell membrane</location>
        <topology evidence="6">Lipid-anchor</topology>
        <orientation evidence="6">Cytoplasmic side</orientation>
    </subcellularLocation>
</comment>
<comment type="tissue specificity">
    <text>Expressed in skeletal muscle cells.</text>
</comment>
<comment type="similarity">
    <text evidence="6">Belongs to the small GTPase superfamily. Ras family.</text>
</comment>
<evidence type="ECO:0000250" key="1"/>
<evidence type="ECO:0000250" key="2">
    <source>
        <dbReference type="UniProtKB" id="O08989"/>
    </source>
</evidence>
<evidence type="ECO:0000250" key="3">
    <source>
        <dbReference type="UniProtKB" id="O14807"/>
    </source>
</evidence>
<evidence type="ECO:0000250" key="4">
    <source>
        <dbReference type="UniProtKB" id="P01116"/>
    </source>
</evidence>
<evidence type="ECO:0000269" key="5">
    <source>
    </source>
</evidence>
<evidence type="ECO:0000305" key="6"/>
<reference key="1">
    <citation type="journal article" date="1997" name="Oncogene">
        <title>Novel small GTPase M-Ras participates in reorganization of actin cytoskeleton.</title>
        <authorList>
            <person name="Matsumoto K."/>
            <person name="Asano T."/>
            <person name="Endo T."/>
        </authorList>
    </citation>
    <scope>NUCLEOTIDE SEQUENCE [MRNA]</scope>
    <source>
        <tissue>Brain</tissue>
    </source>
</reference>
<reference key="2">
    <citation type="submission" date="1997-06" db="EMBL/GenBank/DDBJ databases">
        <authorList>
            <person name="Endo T."/>
        </authorList>
    </citation>
    <scope>SEQUENCE REVISION TO 136</scope>
</reference>
<reference key="3">
    <citation type="journal article" date="2009" name="PLoS ONE">
        <title>Regulator of G-protein signaling 14 (RGS14) is a selective H-Ras effector.</title>
        <authorList>
            <person name="Willard F.S."/>
            <person name="Willard M.D."/>
            <person name="Kimple A.J."/>
            <person name="Soundararajan M."/>
            <person name="Oestreich E.A."/>
            <person name="Li X."/>
            <person name="Sowa N.A."/>
            <person name="Kimple R.J."/>
            <person name="Doyle D.A."/>
            <person name="Der C.J."/>
            <person name="Zylka M.J."/>
            <person name="Snider W.D."/>
            <person name="Siderovski D.P."/>
        </authorList>
    </citation>
    <scope>INTERACTION WITH RGS14</scope>
</reference>
<sequence>MATSAVPSDNLPTYKLVVVGDGGVGKSALTIQFFQKIFVPDYDPTIEDSYLKHTEIDNQWAILDVLDTAGQEEFSAMREQYMRTGDGFLIVYSVTDKASFEHVDRFHQLILRVKDRESFPMILVANKVDLMHLRKVTRDQGKEMATKYNIPYIETSAKDPPLNVDKTFHDLVRVIRQQVPEKNQKKKKKTKWRGDRATGTHKLQCVIL</sequence>
<feature type="chain" id="PRO_0000082656" description="Ras-related protein M-Ras">
    <location>
        <begin position="1"/>
        <end position="205"/>
    </location>
</feature>
<feature type="propeptide" id="PRO_0000281306" description="Removed in mature form" evidence="1">
    <location>
        <begin position="206"/>
        <end position="208"/>
    </location>
</feature>
<feature type="short sequence motif" description="Effector region">
    <location>
        <begin position="42"/>
        <end position="50"/>
    </location>
</feature>
<feature type="binding site" evidence="3">
    <location>
        <position position="21"/>
    </location>
    <ligand>
        <name>GTP</name>
        <dbReference type="ChEBI" id="CHEBI:37565"/>
    </ligand>
</feature>
<feature type="binding site" evidence="3">
    <location>
        <position position="22"/>
    </location>
    <ligand>
        <name>GTP</name>
        <dbReference type="ChEBI" id="CHEBI:37565"/>
    </ligand>
</feature>
<feature type="binding site" evidence="3">
    <location>
        <position position="23"/>
    </location>
    <ligand>
        <name>GTP</name>
        <dbReference type="ChEBI" id="CHEBI:37565"/>
    </ligand>
</feature>
<feature type="binding site" evidence="3">
    <location>
        <position position="24"/>
    </location>
    <ligand>
        <name>GTP</name>
        <dbReference type="ChEBI" id="CHEBI:37565"/>
    </ligand>
</feature>
<feature type="binding site" evidence="3">
    <location>
        <position position="25"/>
    </location>
    <ligand>
        <name>GTP</name>
        <dbReference type="ChEBI" id="CHEBI:37565"/>
    </ligand>
</feature>
<feature type="binding site" evidence="3">
    <location>
        <position position="26"/>
    </location>
    <ligand>
        <name>GTP</name>
        <dbReference type="ChEBI" id="CHEBI:37565"/>
    </ligand>
</feature>
<feature type="binding site" evidence="3">
    <location>
        <position position="27"/>
    </location>
    <ligand>
        <name>GTP</name>
        <dbReference type="ChEBI" id="CHEBI:37565"/>
    </ligand>
</feature>
<feature type="binding site" evidence="3">
    <location>
        <position position="27"/>
    </location>
    <ligand>
        <name>Mg(2+)</name>
        <dbReference type="ChEBI" id="CHEBI:18420"/>
    </ligand>
</feature>
<feature type="binding site" evidence="3">
    <location>
        <position position="28"/>
    </location>
    <ligand>
        <name>GTP</name>
        <dbReference type="ChEBI" id="CHEBI:37565"/>
    </ligand>
</feature>
<feature type="binding site" evidence="3">
    <location>
        <position position="38"/>
    </location>
    <ligand>
        <name>GTP</name>
        <dbReference type="ChEBI" id="CHEBI:37565"/>
    </ligand>
</feature>
<feature type="binding site" evidence="3">
    <location>
        <position position="39"/>
    </location>
    <ligand>
        <name>GTP</name>
        <dbReference type="ChEBI" id="CHEBI:37565"/>
    </ligand>
</feature>
<feature type="binding site" evidence="3">
    <location>
        <position position="40"/>
    </location>
    <ligand>
        <name>GTP</name>
        <dbReference type="ChEBI" id="CHEBI:37565"/>
    </ligand>
</feature>
<feature type="binding site" evidence="3">
    <location>
        <position position="42"/>
    </location>
    <ligand>
        <name>GTP</name>
        <dbReference type="ChEBI" id="CHEBI:37565"/>
    </ligand>
</feature>
<feature type="binding site" evidence="3">
    <location>
        <position position="44"/>
    </location>
    <ligand>
        <name>GTP</name>
        <dbReference type="ChEBI" id="CHEBI:37565"/>
    </ligand>
</feature>
<feature type="binding site" evidence="3">
    <location>
        <position position="45"/>
    </location>
    <ligand>
        <name>GTP</name>
        <dbReference type="ChEBI" id="CHEBI:37565"/>
    </ligand>
</feature>
<feature type="binding site" evidence="3">
    <location>
        <position position="45"/>
    </location>
    <ligand>
        <name>Mg(2+)</name>
        <dbReference type="ChEBI" id="CHEBI:18420"/>
    </ligand>
</feature>
<feature type="binding site" evidence="3">
    <location>
        <position position="67"/>
    </location>
    <ligand>
        <name>Mg(2+)</name>
        <dbReference type="ChEBI" id="CHEBI:18420"/>
    </ligand>
</feature>
<feature type="binding site" evidence="3">
    <location>
        <position position="70"/>
    </location>
    <ligand>
        <name>GTP</name>
        <dbReference type="ChEBI" id="CHEBI:37565"/>
    </ligand>
</feature>
<feature type="binding site" evidence="3">
    <location>
        <position position="126"/>
    </location>
    <ligand>
        <name>GTP</name>
        <dbReference type="ChEBI" id="CHEBI:37565"/>
    </ligand>
</feature>
<feature type="binding site" evidence="3">
    <location>
        <position position="127"/>
    </location>
    <ligand>
        <name>GTP</name>
        <dbReference type="ChEBI" id="CHEBI:37565"/>
    </ligand>
</feature>
<feature type="binding site" evidence="3">
    <location>
        <position position="129"/>
    </location>
    <ligand>
        <name>GTP</name>
        <dbReference type="ChEBI" id="CHEBI:37565"/>
    </ligand>
</feature>
<feature type="binding site" evidence="3">
    <location>
        <position position="156"/>
    </location>
    <ligand>
        <name>GTP</name>
        <dbReference type="ChEBI" id="CHEBI:37565"/>
    </ligand>
</feature>
<feature type="binding site" evidence="3">
    <location>
        <position position="157"/>
    </location>
    <ligand>
        <name>GTP</name>
        <dbReference type="ChEBI" id="CHEBI:37565"/>
    </ligand>
</feature>
<feature type="binding site" evidence="3">
    <location>
        <position position="158"/>
    </location>
    <ligand>
        <name>GTP</name>
        <dbReference type="ChEBI" id="CHEBI:37565"/>
    </ligand>
</feature>
<feature type="modified residue" description="Cysteine methyl ester" evidence="1">
    <location>
        <position position="205"/>
    </location>
</feature>
<feature type="lipid moiety-binding region" description="S-geranylgeranyl cysteine" evidence="1">
    <location>
        <position position="205"/>
    </location>
</feature>
<gene>
    <name type="primary">Mras</name>
    <name type="synonym">Rras3</name>
</gene>
<protein>
    <recommendedName>
        <fullName>Ras-related protein M-Ras</fullName>
        <ecNumber evidence="4">3.6.5.2</ecNumber>
    </recommendedName>
    <alternativeName>
        <fullName>Ras-related protein R-Ras3</fullName>
    </alternativeName>
</protein>